<feature type="chain" id="PRO_0000445787" description="Alpha-1,3-arabinosyltransferase XAT3">
    <location>
        <begin position="1"/>
        <end position="576"/>
    </location>
</feature>
<feature type="topological domain" description="Cytoplasmic" evidence="6">
    <location>
        <begin position="1"/>
        <end position="19"/>
    </location>
</feature>
<feature type="transmembrane region" description="Helical; Signal-anchor for type II membrane protein" evidence="1">
    <location>
        <begin position="20"/>
        <end position="40"/>
    </location>
</feature>
<feature type="topological domain" description="Lumenal" evidence="6">
    <location>
        <begin position="41"/>
        <end position="576"/>
    </location>
</feature>
<feature type="region of interest" description="Disordered" evidence="3">
    <location>
        <begin position="64"/>
        <end position="171"/>
    </location>
</feature>
<feature type="compositionally biased region" description="Basic and acidic residues" evidence="3">
    <location>
        <begin position="73"/>
        <end position="98"/>
    </location>
</feature>
<feature type="compositionally biased region" description="Basic and acidic residues" evidence="3">
    <location>
        <begin position="126"/>
        <end position="138"/>
    </location>
</feature>
<feature type="compositionally biased region" description="Basic and acidic residues" evidence="3">
    <location>
        <begin position="147"/>
        <end position="163"/>
    </location>
</feature>
<feature type="glycosylation site" description="N-linked (GlcNAc...) asparagine" evidence="2">
    <location>
        <position position="172"/>
    </location>
</feature>
<feature type="glycosylation site" description="N-linked (GlcNAc...) asparagine" evidence="2">
    <location>
        <position position="375"/>
    </location>
</feature>
<feature type="glycosylation site" description="N-linked (GlcNAc...) asparagine" evidence="2">
    <location>
        <position position="443"/>
    </location>
</feature>
<dbReference type="EC" id="2.4.2.-" evidence="4"/>
<dbReference type="EMBL" id="AC084404">
    <property type="protein sequence ID" value="AAK50581.1"/>
    <property type="molecule type" value="Genomic_DNA"/>
</dbReference>
<dbReference type="EMBL" id="DP000009">
    <property type="protein sequence ID" value="ABF97170.1"/>
    <property type="molecule type" value="Genomic_DNA"/>
</dbReference>
<dbReference type="EMBL" id="AP008209">
    <property type="protein sequence ID" value="BAF12422.1"/>
    <property type="molecule type" value="Genomic_DNA"/>
</dbReference>
<dbReference type="EMBL" id="AP014959">
    <property type="protein sequence ID" value="BAS84963.1"/>
    <property type="molecule type" value="Genomic_DNA"/>
</dbReference>
<dbReference type="EMBL" id="CM000140">
    <property type="protein sequence ID" value="EAZ27523.1"/>
    <property type="molecule type" value="Genomic_DNA"/>
</dbReference>
<dbReference type="EMBL" id="AK098896">
    <property type="protein sequence ID" value="BAG93800.1"/>
    <property type="molecule type" value="mRNA"/>
</dbReference>
<dbReference type="SMR" id="Q10I20"/>
<dbReference type="FunCoup" id="Q10I20">
    <property type="interactions" value="130"/>
</dbReference>
<dbReference type="STRING" id="39947.Q10I20"/>
<dbReference type="CAZy" id="GT61">
    <property type="family name" value="Glycosyltransferase Family 61"/>
</dbReference>
<dbReference type="GlyCosmos" id="Q10I20">
    <property type="glycosylation" value="3 sites, No reported glycans"/>
</dbReference>
<dbReference type="PaxDb" id="39947-Q10I20"/>
<dbReference type="EnsemblPlants" id="Os03t0567600-01">
    <property type="protein sequence ID" value="Os03t0567600-01"/>
    <property type="gene ID" value="Os03g0567600"/>
</dbReference>
<dbReference type="EnsemblPlants" id="Os03t0567600-02">
    <property type="protein sequence ID" value="Os03t0567600-02"/>
    <property type="gene ID" value="Os03g0567600"/>
</dbReference>
<dbReference type="Gramene" id="Os03t0567600-01">
    <property type="protein sequence ID" value="Os03t0567600-01"/>
    <property type="gene ID" value="Os03g0567600"/>
</dbReference>
<dbReference type="Gramene" id="Os03t0567600-02">
    <property type="protein sequence ID" value="Os03t0567600-02"/>
    <property type="gene ID" value="Os03g0567600"/>
</dbReference>
<dbReference type="KEGG" id="dosa:Os03g0567600"/>
<dbReference type="KEGG" id="osa:4333275"/>
<dbReference type="eggNOG" id="KOG4698">
    <property type="taxonomic scope" value="Eukaryota"/>
</dbReference>
<dbReference type="HOGENOM" id="CLU_016869_3_1_1"/>
<dbReference type="InParanoid" id="Q10I20"/>
<dbReference type="OMA" id="CNTMEAK"/>
<dbReference type="OrthoDB" id="529273at2759"/>
<dbReference type="Proteomes" id="UP000000763">
    <property type="component" value="Chromosome 3"/>
</dbReference>
<dbReference type="Proteomes" id="UP000007752">
    <property type="component" value="Chromosome 3"/>
</dbReference>
<dbReference type="Proteomes" id="UP000059680">
    <property type="component" value="Chromosome 3"/>
</dbReference>
<dbReference type="ExpressionAtlas" id="Q10I20">
    <property type="expression patterns" value="baseline and differential"/>
</dbReference>
<dbReference type="GO" id="GO:0000139">
    <property type="term" value="C:Golgi membrane"/>
    <property type="evidence" value="ECO:0000314"/>
    <property type="project" value="UniProtKB"/>
</dbReference>
<dbReference type="GO" id="GO:0052636">
    <property type="term" value="F:arabinosyltransferase activity"/>
    <property type="evidence" value="ECO:0000314"/>
    <property type="project" value="UniProtKB"/>
</dbReference>
<dbReference type="GO" id="GO:0016757">
    <property type="term" value="F:glycosyltransferase activity"/>
    <property type="evidence" value="ECO:0000318"/>
    <property type="project" value="GO_Central"/>
</dbReference>
<dbReference type="GO" id="GO:0009664">
    <property type="term" value="P:plant-type cell wall organization"/>
    <property type="evidence" value="ECO:0000315"/>
    <property type="project" value="UniProtKB"/>
</dbReference>
<dbReference type="InterPro" id="IPR049625">
    <property type="entry name" value="Glyco_transf_61_cat"/>
</dbReference>
<dbReference type="InterPro" id="IPR007657">
    <property type="entry name" value="Glycosyltransferase_61"/>
</dbReference>
<dbReference type="PANTHER" id="PTHR20961:SF97">
    <property type="entry name" value="ALPHA-1,3-ARABINOSYLTRANSFERASE XAT3"/>
    <property type="match status" value="1"/>
</dbReference>
<dbReference type="PANTHER" id="PTHR20961">
    <property type="entry name" value="GLYCOSYLTRANSFERASE"/>
    <property type="match status" value="1"/>
</dbReference>
<dbReference type="Pfam" id="PF04577">
    <property type="entry name" value="Glyco_transf_61"/>
    <property type="match status" value="1"/>
</dbReference>
<name>XAT3_ORYSJ</name>
<organism>
    <name type="scientific">Oryza sativa subsp. japonica</name>
    <name type="common">Rice</name>
    <dbReference type="NCBI Taxonomy" id="39947"/>
    <lineage>
        <taxon>Eukaryota</taxon>
        <taxon>Viridiplantae</taxon>
        <taxon>Streptophyta</taxon>
        <taxon>Embryophyta</taxon>
        <taxon>Tracheophyta</taxon>
        <taxon>Spermatophyta</taxon>
        <taxon>Magnoliopsida</taxon>
        <taxon>Liliopsida</taxon>
        <taxon>Poales</taxon>
        <taxon>Poaceae</taxon>
        <taxon>BOP clade</taxon>
        <taxon>Oryzoideae</taxon>
        <taxon>Oryzeae</taxon>
        <taxon>Oryzinae</taxon>
        <taxon>Oryza</taxon>
        <taxon>Oryza sativa</taxon>
    </lineage>
</organism>
<protein>
    <recommendedName>
        <fullName evidence="6">Alpha-1,3-arabinosyltransferase XAT3</fullName>
        <ecNumber evidence="4">2.4.2.-</ecNumber>
    </recommendedName>
    <alternativeName>
        <fullName evidence="5">Xylan arabinosyltransferase 3</fullName>
        <shortName evidence="5">OsXAT3</shortName>
    </alternativeName>
</protein>
<accession>Q10I20</accession>
<accession>Q94LB9</accession>
<keyword id="KW-0961">Cell wall biogenesis/degradation</keyword>
<keyword id="KW-0325">Glycoprotein</keyword>
<keyword id="KW-0328">Glycosyltransferase</keyword>
<keyword id="KW-0333">Golgi apparatus</keyword>
<keyword id="KW-0472">Membrane</keyword>
<keyword id="KW-1185">Reference proteome</keyword>
<keyword id="KW-0735">Signal-anchor</keyword>
<keyword id="KW-0808">Transferase</keyword>
<keyword id="KW-0812">Transmembrane</keyword>
<keyword id="KW-1133">Transmembrane helix</keyword>
<reference key="1">
    <citation type="journal article" date="2005" name="Genome Res.">
        <title>Sequence, annotation, and analysis of synteny between rice chromosome 3 and diverged grass species.</title>
        <authorList>
            <consortium name="The rice chromosome 3 sequencing consortium"/>
            <person name="Buell C.R."/>
            <person name="Yuan Q."/>
            <person name="Ouyang S."/>
            <person name="Liu J."/>
            <person name="Zhu W."/>
            <person name="Wang A."/>
            <person name="Maiti R."/>
            <person name="Haas B."/>
            <person name="Wortman J."/>
            <person name="Pertea M."/>
            <person name="Jones K.M."/>
            <person name="Kim M."/>
            <person name="Overton L."/>
            <person name="Tsitrin T."/>
            <person name="Fadrosh D."/>
            <person name="Bera J."/>
            <person name="Weaver B."/>
            <person name="Jin S."/>
            <person name="Johri S."/>
            <person name="Reardon M."/>
            <person name="Webb K."/>
            <person name="Hill J."/>
            <person name="Moffat K."/>
            <person name="Tallon L."/>
            <person name="Van Aken S."/>
            <person name="Lewis M."/>
            <person name="Utterback T."/>
            <person name="Feldblyum T."/>
            <person name="Zismann V."/>
            <person name="Iobst S."/>
            <person name="Hsiao J."/>
            <person name="de Vazeille A.R."/>
            <person name="Salzberg S.L."/>
            <person name="White O."/>
            <person name="Fraser C.M."/>
            <person name="Yu Y."/>
            <person name="Kim H."/>
            <person name="Rambo T."/>
            <person name="Currie J."/>
            <person name="Collura K."/>
            <person name="Kernodle-Thompson S."/>
            <person name="Wei F."/>
            <person name="Kudrna K."/>
            <person name="Ammiraju J.S.S."/>
            <person name="Luo M."/>
            <person name="Goicoechea J.L."/>
            <person name="Wing R.A."/>
            <person name="Henry D."/>
            <person name="Oates R."/>
            <person name="Palmer M."/>
            <person name="Pries G."/>
            <person name="Saski C."/>
            <person name="Simmons J."/>
            <person name="Soderlund C."/>
            <person name="Nelson W."/>
            <person name="de la Bastide M."/>
            <person name="Spiegel L."/>
            <person name="Nascimento L."/>
            <person name="Huang E."/>
            <person name="Preston R."/>
            <person name="Zutavern T."/>
            <person name="Palmer L."/>
            <person name="O'Shaughnessy A."/>
            <person name="Dike S."/>
            <person name="McCombie W.R."/>
            <person name="Minx P."/>
            <person name="Cordum H."/>
            <person name="Wilson R."/>
            <person name="Jin W."/>
            <person name="Lee H.R."/>
            <person name="Jiang J."/>
            <person name="Jackson S."/>
        </authorList>
    </citation>
    <scope>NUCLEOTIDE SEQUENCE [LARGE SCALE GENOMIC DNA]</scope>
    <source>
        <strain>cv. Nipponbare</strain>
    </source>
</reference>
<reference key="2">
    <citation type="journal article" date="2005" name="Nature">
        <title>The map-based sequence of the rice genome.</title>
        <authorList>
            <consortium name="International rice genome sequencing project (IRGSP)"/>
        </authorList>
    </citation>
    <scope>NUCLEOTIDE SEQUENCE [LARGE SCALE GENOMIC DNA]</scope>
    <source>
        <strain>cv. Nipponbare</strain>
    </source>
</reference>
<reference key="3">
    <citation type="journal article" date="2008" name="Nucleic Acids Res.">
        <title>The rice annotation project database (RAP-DB): 2008 update.</title>
        <authorList>
            <consortium name="The rice annotation project (RAP)"/>
        </authorList>
    </citation>
    <scope>GENOME REANNOTATION</scope>
    <source>
        <strain>cv. Nipponbare</strain>
    </source>
</reference>
<reference key="4">
    <citation type="journal article" date="2013" name="Rice">
        <title>Improvement of the Oryza sativa Nipponbare reference genome using next generation sequence and optical map data.</title>
        <authorList>
            <person name="Kawahara Y."/>
            <person name="de la Bastide M."/>
            <person name="Hamilton J.P."/>
            <person name="Kanamori H."/>
            <person name="McCombie W.R."/>
            <person name="Ouyang S."/>
            <person name="Schwartz D.C."/>
            <person name="Tanaka T."/>
            <person name="Wu J."/>
            <person name="Zhou S."/>
            <person name="Childs K.L."/>
            <person name="Davidson R.M."/>
            <person name="Lin H."/>
            <person name="Quesada-Ocampo L."/>
            <person name="Vaillancourt B."/>
            <person name="Sakai H."/>
            <person name="Lee S.S."/>
            <person name="Kim J."/>
            <person name="Numa H."/>
            <person name="Itoh T."/>
            <person name="Buell C.R."/>
            <person name="Matsumoto T."/>
        </authorList>
    </citation>
    <scope>GENOME REANNOTATION</scope>
    <source>
        <strain>cv. Nipponbare</strain>
    </source>
</reference>
<reference key="5">
    <citation type="journal article" date="2005" name="PLoS Biol.">
        <title>The genomes of Oryza sativa: a history of duplications.</title>
        <authorList>
            <person name="Yu J."/>
            <person name="Wang J."/>
            <person name="Lin W."/>
            <person name="Li S."/>
            <person name="Li H."/>
            <person name="Zhou J."/>
            <person name="Ni P."/>
            <person name="Dong W."/>
            <person name="Hu S."/>
            <person name="Zeng C."/>
            <person name="Zhang J."/>
            <person name="Zhang Y."/>
            <person name="Li R."/>
            <person name="Xu Z."/>
            <person name="Li S."/>
            <person name="Li X."/>
            <person name="Zheng H."/>
            <person name="Cong L."/>
            <person name="Lin L."/>
            <person name="Yin J."/>
            <person name="Geng J."/>
            <person name="Li G."/>
            <person name="Shi J."/>
            <person name="Liu J."/>
            <person name="Lv H."/>
            <person name="Li J."/>
            <person name="Wang J."/>
            <person name="Deng Y."/>
            <person name="Ran L."/>
            <person name="Shi X."/>
            <person name="Wang X."/>
            <person name="Wu Q."/>
            <person name="Li C."/>
            <person name="Ren X."/>
            <person name="Wang J."/>
            <person name="Wang X."/>
            <person name="Li D."/>
            <person name="Liu D."/>
            <person name="Zhang X."/>
            <person name="Ji Z."/>
            <person name="Zhao W."/>
            <person name="Sun Y."/>
            <person name="Zhang Z."/>
            <person name="Bao J."/>
            <person name="Han Y."/>
            <person name="Dong L."/>
            <person name="Ji J."/>
            <person name="Chen P."/>
            <person name="Wu S."/>
            <person name="Liu J."/>
            <person name="Xiao Y."/>
            <person name="Bu D."/>
            <person name="Tan J."/>
            <person name="Yang L."/>
            <person name="Ye C."/>
            <person name="Zhang J."/>
            <person name="Xu J."/>
            <person name="Zhou Y."/>
            <person name="Yu Y."/>
            <person name="Zhang B."/>
            <person name="Zhuang S."/>
            <person name="Wei H."/>
            <person name="Liu B."/>
            <person name="Lei M."/>
            <person name="Yu H."/>
            <person name="Li Y."/>
            <person name="Xu H."/>
            <person name="Wei S."/>
            <person name="He X."/>
            <person name="Fang L."/>
            <person name="Zhang Z."/>
            <person name="Zhang Y."/>
            <person name="Huang X."/>
            <person name="Su Z."/>
            <person name="Tong W."/>
            <person name="Li J."/>
            <person name="Tong Z."/>
            <person name="Li S."/>
            <person name="Ye J."/>
            <person name="Wang L."/>
            <person name="Fang L."/>
            <person name="Lei T."/>
            <person name="Chen C.-S."/>
            <person name="Chen H.-C."/>
            <person name="Xu Z."/>
            <person name="Li H."/>
            <person name="Huang H."/>
            <person name="Zhang F."/>
            <person name="Xu H."/>
            <person name="Li N."/>
            <person name="Zhao C."/>
            <person name="Li S."/>
            <person name="Dong L."/>
            <person name="Huang Y."/>
            <person name="Li L."/>
            <person name="Xi Y."/>
            <person name="Qi Q."/>
            <person name="Li W."/>
            <person name="Zhang B."/>
            <person name="Hu W."/>
            <person name="Zhang Y."/>
            <person name="Tian X."/>
            <person name="Jiao Y."/>
            <person name="Liang X."/>
            <person name="Jin J."/>
            <person name="Gao L."/>
            <person name="Zheng W."/>
            <person name="Hao B."/>
            <person name="Liu S.-M."/>
            <person name="Wang W."/>
            <person name="Yuan L."/>
            <person name="Cao M."/>
            <person name="McDermott J."/>
            <person name="Samudrala R."/>
            <person name="Wang J."/>
            <person name="Wong G.K.-S."/>
            <person name="Yang H."/>
        </authorList>
    </citation>
    <scope>NUCLEOTIDE SEQUENCE [LARGE SCALE GENOMIC DNA]</scope>
    <source>
        <strain>cv. Nipponbare</strain>
    </source>
</reference>
<reference key="6">
    <citation type="journal article" date="2003" name="Science">
        <title>Collection, mapping, and annotation of over 28,000 cDNA clones from japonica rice.</title>
        <authorList>
            <consortium name="The rice full-length cDNA consortium"/>
        </authorList>
    </citation>
    <scope>NUCLEOTIDE SEQUENCE [LARGE SCALE MRNA]</scope>
    <source>
        <strain>cv. Nipponbare</strain>
    </source>
</reference>
<reference key="7">
    <citation type="journal article" date="2012" name="Proc. Natl. Acad. Sci. U.S.A.">
        <title>Glycosyl transferases in family 61 mediate arabinofuranosyl transfer onto xylan in grasses.</title>
        <authorList>
            <person name="Anders N."/>
            <person name="Wilkinson M.D."/>
            <person name="Lovegrove A."/>
            <person name="Freeman J."/>
            <person name="Tryfona T."/>
            <person name="Pellny T.K."/>
            <person name="Weimar T."/>
            <person name="Mortimer J.C."/>
            <person name="Stott K."/>
            <person name="Baker J.M."/>
            <person name="Defoin-Platel M."/>
            <person name="Shewry P.R."/>
            <person name="Dupree P."/>
            <person name="Mitchell R.A."/>
        </authorList>
    </citation>
    <scope>FUNCTION</scope>
    <scope>CATALYTIC ACTIVITY</scope>
    <scope>SUBCELLULAR LOCATION</scope>
</reference>
<sequence>MKAGERPKLVRGVRQESRRFRLLVIVVGFFLVSLTFVFVSKPDAILFSLNGKLPVEQAPTSILIQQKVNEPSGESRKTSTDALRGDPKVVDDEADAKPKGTGGGSEEEEGRVLSEPDPTSGMMEPTHNKDGNGHKSHQETLGGGGDGESKGNDEEGEHAEQKHKVTLPTVSNYTIHDAAEDTENAKQEGMNNVQQGSKPLCDFSNFRANVCEMRGDVRIHPTATSVLFMEPEGSQRDEVWKIKPYPRKGDEFCLSHITEVTVKSSKVAPECTKYHDVPAVIFSLTGYTGNLFHDFTDVLVPLFTTASEFNGEVQFLITDMALWWTIKYQTVLQKLSKYPVIDFSKDDQVHCFKHAIVGLHAYMEFTIDSTKAPHNYSMADFNRFMRGAYSLGRDSVTVLGEYPKIKPRLLIIKRHRTRMFLNLDEIISMAEELGFEVVIDEANVSSDISRFARLVNSVDVMMGVHGAGLTNCVFLPQHATLIQIVPWGGLDWISRTDFGNPAELMGLRYKQYSIGVDESSLTDQYPRDHEIFKNPISFHQRGFDFIRQTFMDKQNVKLDCKRFRPILLEALDNLNP</sequence>
<gene>
    <name evidence="5" type="primary">XAT3</name>
    <name evidence="10" type="ordered locus">Os03g0567600</name>
    <name evidence="9" type="ordered locus">LOC_Os03g37010</name>
    <name evidence="11" type="ORF">OsJ_11476</name>
    <name evidence="8" type="ORF">OSJNBa0026A15.4</name>
</gene>
<proteinExistence type="evidence at protein level"/>
<comment type="function">
    <text evidence="4">Glycosyltransferase involved in the arabinosylation of xylan, the major hemicellulose (non-cellulosic component) of primary and secondary walls of angiosperms (PubMed:22215597). Possesses alpha-1,3-arabinosyltransferase activity, transferring an arabinofuranose residue to the xylan backbone (PubMed:22215597).</text>
</comment>
<comment type="pathway">
    <text evidence="6">Glycan metabolism.</text>
</comment>
<comment type="subcellular location">
    <subcellularLocation>
        <location evidence="7">Golgi apparatus membrane</location>
        <topology evidence="1">Single-pass type II membrane protein</topology>
    </subcellularLocation>
</comment>
<comment type="similarity">
    <text evidence="6">Belongs to the glycosyltransferase 61 family.</text>
</comment>
<evidence type="ECO:0000255" key="1"/>
<evidence type="ECO:0000255" key="2">
    <source>
        <dbReference type="PROSITE-ProRule" id="PRU00498"/>
    </source>
</evidence>
<evidence type="ECO:0000256" key="3">
    <source>
        <dbReference type="SAM" id="MobiDB-lite"/>
    </source>
</evidence>
<evidence type="ECO:0000269" key="4">
    <source>
    </source>
</evidence>
<evidence type="ECO:0000303" key="5">
    <source>
    </source>
</evidence>
<evidence type="ECO:0000305" key="6"/>
<evidence type="ECO:0000305" key="7">
    <source>
    </source>
</evidence>
<evidence type="ECO:0000312" key="8">
    <source>
        <dbReference type="EMBL" id="AAK50581.1"/>
    </source>
</evidence>
<evidence type="ECO:0000312" key="9">
    <source>
        <dbReference type="EMBL" id="ABF97170.1"/>
    </source>
</evidence>
<evidence type="ECO:0000312" key="10">
    <source>
        <dbReference type="EMBL" id="BAF12422.1"/>
    </source>
</evidence>
<evidence type="ECO:0000312" key="11">
    <source>
        <dbReference type="EMBL" id="EAZ27523.1"/>
    </source>
</evidence>